<evidence type="ECO:0000255" key="1">
    <source>
        <dbReference type="HAMAP-Rule" id="MF_00135"/>
    </source>
</evidence>
<proteinExistence type="inferred from homology"/>
<protein>
    <recommendedName>
        <fullName evidence="1">N-(5'-phosphoribosyl)anthranilate isomerase</fullName>
        <shortName evidence="1">PRAI</shortName>
        <ecNumber evidence="1">5.3.1.24</ecNumber>
    </recommendedName>
</protein>
<dbReference type="EC" id="5.3.1.24" evidence="1"/>
<dbReference type="EMBL" id="CP000450">
    <property type="protein sequence ID" value="ABI59406.1"/>
    <property type="molecule type" value="Genomic_DNA"/>
</dbReference>
<dbReference type="RefSeq" id="WP_011634226.1">
    <property type="nucleotide sequence ID" value="NC_008344.1"/>
</dbReference>
<dbReference type="SMR" id="Q0AGX6"/>
<dbReference type="STRING" id="335283.Neut_1151"/>
<dbReference type="KEGG" id="net:Neut_1151"/>
<dbReference type="eggNOG" id="COG0135">
    <property type="taxonomic scope" value="Bacteria"/>
</dbReference>
<dbReference type="HOGENOM" id="CLU_076364_2_0_4"/>
<dbReference type="OrthoDB" id="9796196at2"/>
<dbReference type="UniPathway" id="UPA00035">
    <property type="reaction ID" value="UER00042"/>
</dbReference>
<dbReference type="Proteomes" id="UP000001966">
    <property type="component" value="Chromosome"/>
</dbReference>
<dbReference type="GO" id="GO:0004640">
    <property type="term" value="F:phosphoribosylanthranilate isomerase activity"/>
    <property type="evidence" value="ECO:0007669"/>
    <property type="project" value="UniProtKB-UniRule"/>
</dbReference>
<dbReference type="GO" id="GO:0000162">
    <property type="term" value="P:L-tryptophan biosynthetic process"/>
    <property type="evidence" value="ECO:0007669"/>
    <property type="project" value="UniProtKB-UniRule"/>
</dbReference>
<dbReference type="CDD" id="cd00405">
    <property type="entry name" value="PRAI"/>
    <property type="match status" value="1"/>
</dbReference>
<dbReference type="FunFam" id="3.20.20.70:FF:000075">
    <property type="entry name" value="Tryptophan biosynthesis protein TRP1"/>
    <property type="match status" value="1"/>
</dbReference>
<dbReference type="Gene3D" id="3.20.20.70">
    <property type="entry name" value="Aldolase class I"/>
    <property type="match status" value="1"/>
</dbReference>
<dbReference type="HAMAP" id="MF_00135">
    <property type="entry name" value="PRAI"/>
    <property type="match status" value="1"/>
</dbReference>
<dbReference type="InterPro" id="IPR013785">
    <property type="entry name" value="Aldolase_TIM"/>
</dbReference>
<dbReference type="InterPro" id="IPR001240">
    <property type="entry name" value="PRAI_dom"/>
</dbReference>
<dbReference type="InterPro" id="IPR011060">
    <property type="entry name" value="RibuloseP-bd_barrel"/>
</dbReference>
<dbReference type="InterPro" id="IPR044643">
    <property type="entry name" value="TrpF_fam"/>
</dbReference>
<dbReference type="NCBIfam" id="NF002298">
    <property type="entry name" value="PRK01222.1-4"/>
    <property type="match status" value="1"/>
</dbReference>
<dbReference type="NCBIfam" id="NF002299">
    <property type="entry name" value="PRK01222.1-6"/>
    <property type="match status" value="1"/>
</dbReference>
<dbReference type="PANTHER" id="PTHR42894">
    <property type="entry name" value="N-(5'-PHOSPHORIBOSYL)ANTHRANILATE ISOMERASE"/>
    <property type="match status" value="1"/>
</dbReference>
<dbReference type="PANTHER" id="PTHR42894:SF1">
    <property type="entry name" value="N-(5'-PHOSPHORIBOSYL)ANTHRANILATE ISOMERASE"/>
    <property type="match status" value="1"/>
</dbReference>
<dbReference type="Pfam" id="PF00697">
    <property type="entry name" value="PRAI"/>
    <property type="match status" value="1"/>
</dbReference>
<dbReference type="SUPFAM" id="SSF51366">
    <property type="entry name" value="Ribulose-phoshate binding barrel"/>
    <property type="match status" value="1"/>
</dbReference>
<name>TRPF_NITEC</name>
<sequence>MRIRVKICGITRLEDAMTAVHHGVDAIGFILWPQSERYISPEEAGQIVRYLPPFVQAVGVFVNPDKSWVEVASAAAGLDLLQFHGDESPDFCSQFHLPYIKAVRVRDGLDLLQYAQCYEGSKGLLLDAYAEGKPGGTGHIFDWKLIPSGLSLPWILSGGLHSDNVVDAIEQTRPLAIDVSSGVEIANGIKDADKISVFMQGVRSCENV</sequence>
<comment type="catalytic activity">
    <reaction evidence="1">
        <text>N-(5-phospho-beta-D-ribosyl)anthranilate = 1-(2-carboxyphenylamino)-1-deoxy-D-ribulose 5-phosphate</text>
        <dbReference type="Rhea" id="RHEA:21540"/>
        <dbReference type="ChEBI" id="CHEBI:18277"/>
        <dbReference type="ChEBI" id="CHEBI:58613"/>
        <dbReference type="EC" id="5.3.1.24"/>
    </reaction>
</comment>
<comment type="pathway">
    <text evidence="1">Amino-acid biosynthesis; L-tryptophan biosynthesis; L-tryptophan from chorismate: step 3/5.</text>
</comment>
<comment type="similarity">
    <text evidence="1">Belongs to the TrpF family.</text>
</comment>
<accession>Q0AGX6</accession>
<keyword id="KW-0028">Amino-acid biosynthesis</keyword>
<keyword id="KW-0057">Aromatic amino acid biosynthesis</keyword>
<keyword id="KW-0413">Isomerase</keyword>
<keyword id="KW-0822">Tryptophan biosynthesis</keyword>
<feature type="chain" id="PRO_1000203210" description="N-(5'-phosphoribosyl)anthranilate isomerase">
    <location>
        <begin position="1"/>
        <end position="208"/>
    </location>
</feature>
<gene>
    <name evidence="1" type="primary">trpF</name>
    <name type="ordered locus">Neut_1151</name>
</gene>
<reference key="1">
    <citation type="journal article" date="2007" name="Environ. Microbiol.">
        <title>Whole-genome analysis of the ammonia-oxidizing bacterium, Nitrosomonas eutropha C91: implications for niche adaptation.</title>
        <authorList>
            <person name="Stein L.Y."/>
            <person name="Arp D.J."/>
            <person name="Berube P.M."/>
            <person name="Chain P.S."/>
            <person name="Hauser L."/>
            <person name="Jetten M.S."/>
            <person name="Klotz M.G."/>
            <person name="Larimer F.W."/>
            <person name="Norton J.M."/>
            <person name="Op den Camp H.J.M."/>
            <person name="Shin M."/>
            <person name="Wei X."/>
        </authorList>
    </citation>
    <scope>NUCLEOTIDE SEQUENCE [LARGE SCALE GENOMIC DNA]</scope>
    <source>
        <strain>DSM 101675 / C91 / Nm57</strain>
    </source>
</reference>
<organism>
    <name type="scientific">Nitrosomonas eutropha (strain DSM 101675 / C91 / Nm57)</name>
    <dbReference type="NCBI Taxonomy" id="335283"/>
    <lineage>
        <taxon>Bacteria</taxon>
        <taxon>Pseudomonadati</taxon>
        <taxon>Pseudomonadota</taxon>
        <taxon>Betaproteobacteria</taxon>
        <taxon>Nitrosomonadales</taxon>
        <taxon>Nitrosomonadaceae</taxon>
        <taxon>Nitrosomonas</taxon>
    </lineage>
</organism>